<reference key="1">
    <citation type="submission" date="2007-03" db="EMBL/GenBank/DDBJ databases">
        <title>Complete sequence of Desulfotomaculum reducens MI-1.</title>
        <authorList>
            <consortium name="US DOE Joint Genome Institute"/>
            <person name="Copeland A."/>
            <person name="Lucas S."/>
            <person name="Lapidus A."/>
            <person name="Barry K."/>
            <person name="Detter J.C."/>
            <person name="Glavina del Rio T."/>
            <person name="Hammon N."/>
            <person name="Israni S."/>
            <person name="Dalin E."/>
            <person name="Tice H."/>
            <person name="Pitluck S."/>
            <person name="Sims D."/>
            <person name="Brettin T."/>
            <person name="Bruce D."/>
            <person name="Han C."/>
            <person name="Tapia R."/>
            <person name="Schmutz J."/>
            <person name="Larimer F."/>
            <person name="Land M."/>
            <person name="Hauser L."/>
            <person name="Kyrpides N."/>
            <person name="Kim E."/>
            <person name="Tebo B.M."/>
            <person name="Richardson P."/>
        </authorList>
    </citation>
    <scope>NUCLEOTIDE SEQUENCE [LARGE SCALE GENOMIC DNA]</scope>
    <source>
        <strain>ATCC BAA-1160 / DSM 100696 / MI-1</strain>
    </source>
</reference>
<gene>
    <name evidence="1" type="primary">rpsU</name>
    <name type="ordered locus">Dred_2490</name>
</gene>
<protein>
    <recommendedName>
        <fullName evidence="1">Small ribosomal subunit protein bS21</fullName>
    </recommendedName>
    <alternativeName>
        <fullName evidence="3">30S ribosomal protein S21</fullName>
    </alternativeName>
</protein>
<sequence>MAEIRVGKNETLDSALRRFKRSCQKAGVLAEARKHEYYEKPSVKRKKKSEAARKRKSFR</sequence>
<keyword id="KW-1185">Reference proteome</keyword>
<keyword id="KW-0687">Ribonucleoprotein</keyword>
<keyword id="KW-0689">Ribosomal protein</keyword>
<proteinExistence type="inferred from homology"/>
<accession>A4J7E7</accession>
<comment type="similarity">
    <text evidence="1">Belongs to the bacterial ribosomal protein bS21 family.</text>
</comment>
<organism>
    <name type="scientific">Desulforamulus reducens (strain ATCC BAA-1160 / DSM 100696 / MI-1)</name>
    <name type="common">Desulfotomaculum reducens</name>
    <dbReference type="NCBI Taxonomy" id="349161"/>
    <lineage>
        <taxon>Bacteria</taxon>
        <taxon>Bacillati</taxon>
        <taxon>Bacillota</taxon>
        <taxon>Clostridia</taxon>
        <taxon>Eubacteriales</taxon>
        <taxon>Peptococcaceae</taxon>
        <taxon>Desulforamulus</taxon>
    </lineage>
</organism>
<evidence type="ECO:0000255" key="1">
    <source>
        <dbReference type="HAMAP-Rule" id="MF_00358"/>
    </source>
</evidence>
<evidence type="ECO:0000256" key="2">
    <source>
        <dbReference type="SAM" id="MobiDB-lite"/>
    </source>
</evidence>
<evidence type="ECO:0000305" key="3"/>
<feature type="chain" id="PRO_1000072077" description="Small ribosomal subunit protein bS21">
    <location>
        <begin position="1"/>
        <end position="59"/>
    </location>
</feature>
<feature type="region of interest" description="Disordered" evidence="2">
    <location>
        <begin position="40"/>
        <end position="59"/>
    </location>
</feature>
<feature type="compositionally biased region" description="Basic residues" evidence="2">
    <location>
        <begin position="43"/>
        <end position="59"/>
    </location>
</feature>
<name>RS21_DESRM</name>
<dbReference type="EMBL" id="CP000612">
    <property type="protein sequence ID" value="ABO51000.1"/>
    <property type="molecule type" value="Genomic_DNA"/>
</dbReference>
<dbReference type="RefSeq" id="WP_011878798.1">
    <property type="nucleotide sequence ID" value="NC_009253.1"/>
</dbReference>
<dbReference type="SMR" id="A4J7E7"/>
<dbReference type="STRING" id="349161.Dred_2490"/>
<dbReference type="KEGG" id="drm:Dred_2490"/>
<dbReference type="eggNOG" id="COG0828">
    <property type="taxonomic scope" value="Bacteria"/>
</dbReference>
<dbReference type="HOGENOM" id="CLU_159258_3_2_9"/>
<dbReference type="OrthoDB" id="9799244at2"/>
<dbReference type="Proteomes" id="UP000001556">
    <property type="component" value="Chromosome"/>
</dbReference>
<dbReference type="GO" id="GO:1990904">
    <property type="term" value="C:ribonucleoprotein complex"/>
    <property type="evidence" value="ECO:0007669"/>
    <property type="project" value="UniProtKB-KW"/>
</dbReference>
<dbReference type="GO" id="GO:0005840">
    <property type="term" value="C:ribosome"/>
    <property type="evidence" value="ECO:0007669"/>
    <property type="project" value="UniProtKB-KW"/>
</dbReference>
<dbReference type="GO" id="GO:0003735">
    <property type="term" value="F:structural constituent of ribosome"/>
    <property type="evidence" value="ECO:0007669"/>
    <property type="project" value="InterPro"/>
</dbReference>
<dbReference type="GO" id="GO:0006412">
    <property type="term" value="P:translation"/>
    <property type="evidence" value="ECO:0007669"/>
    <property type="project" value="UniProtKB-UniRule"/>
</dbReference>
<dbReference type="Gene3D" id="1.20.5.1150">
    <property type="entry name" value="Ribosomal protein S8"/>
    <property type="match status" value="1"/>
</dbReference>
<dbReference type="HAMAP" id="MF_00358">
    <property type="entry name" value="Ribosomal_bS21"/>
    <property type="match status" value="1"/>
</dbReference>
<dbReference type="InterPro" id="IPR001911">
    <property type="entry name" value="Ribosomal_bS21"/>
</dbReference>
<dbReference type="InterPro" id="IPR018278">
    <property type="entry name" value="Ribosomal_bS21_CS"/>
</dbReference>
<dbReference type="InterPro" id="IPR038380">
    <property type="entry name" value="Ribosomal_bS21_sf"/>
</dbReference>
<dbReference type="NCBIfam" id="TIGR00030">
    <property type="entry name" value="S21p"/>
    <property type="match status" value="1"/>
</dbReference>
<dbReference type="PANTHER" id="PTHR21109">
    <property type="entry name" value="MITOCHONDRIAL 28S RIBOSOMAL PROTEIN S21"/>
    <property type="match status" value="1"/>
</dbReference>
<dbReference type="PANTHER" id="PTHR21109:SF22">
    <property type="entry name" value="SMALL RIBOSOMAL SUBUNIT PROTEIN BS21"/>
    <property type="match status" value="1"/>
</dbReference>
<dbReference type="Pfam" id="PF01165">
    <property type="entry name" value="Ribosomal_S21"/>
    <property type="match status" value="1"/>
</dbReference>
<dbReference type="PRINTS" id="PR00976">
    <property type="entry name" value="RIBOSOMALS21"/>
</dbReference>
<dbReference type="PROSITE" id="PS01181">
    <property type="entry name" value="RIBOSOMAL_S21"/>
    <property type="match status" value="1"/>
</dbReference>